<feature type="chain" id="PRO_1000066499" description="FMN-dependent NADH:quinone oxidoreductase">
    <location>
        <begin position="1"/>
        <end position="201"/>
    </location>
</feature>
<feature type="binding site" evidence="1">
    <location>
        <position position="10"/>
    </location>
    <ligand>
        <name>FMN</name>
        <dbReference type="ChEBI" id="CHEBI:58210"/>
    </ligand>
</feature>
<feature type="binding site" evidence="1">
    <location>
        <begin position="16"/>
        <end position="18"/>
    </location>
    <ligand>
        <name>FMN</name>
        <dbReference type="ChEBI" id="CHEBI:58210"/>
    </ligand>
</feature>
<feature type="binding site" evidence="1">
    <location>
        <begin position="96"/>
        <end position="99"/>
    </location>
    <ligand>
        <name>FMN</name>
        <dbReference type="ChEBI" id="CHEBI:58210"/>
    </ligand>
</feature>
<feature type="binding site" evidence="1">
    <location>
        <begin position="140"/>
        <end position="143"/>
    </location>
    <ligand>
        <name>FMN</name>
        <dbReference type="ChEBI" id="CHEBI:58210"/>
    </ligand>
</feature>
<gene>
    <name evidence="1" type="primary">azoR</name>
    <name type="ordered locus">CKO_01439</name>
</gene>
<accession>A8AGG0</accession>
<sequence length="201" mass="21554">MSKVLVLKSSILAGYSQSGQLSDYFVEQWREKHPADAITVRDLAANPVPVLDGELVGALRPSDAPLTPRQQDALALSDELIAELQAHDVIVIAAPMYNFNIPTQLKNYFDLVARAGVTFRYTEKGPEGLVTGKRAVILSSRGGIHKDTPTDLIAPYLKVFLGFIGITDVNFVFAEGIAYGPEVAAKAQSDAKAAIDSVVAA</sequence>
<proteinExistence type="inferred from homology"/>
<organism>
    <name type="scientific">Citrobacter koseri (strain ATCC BAA-895 / CDC 4225-83 / SGSC4696)</name>
    <dbReference type="NCBI Taxonomy" id="290338"/>
    <lineage>
        <taxon>Bacteria</taxon>
        <taxon>Pseudomonadati</taxon>
        <taxon>Pseudomonadota</taxon>
        <taxon>Gammaproteobacteria</taxon>
        <taxon>Enterobacterales</taxon>
        <taxon>Enterobacteriaceae</taxon>
        <taxon>Citrobacter</taxon>
    </lineage>
</organism>
<name>AZOR_CITK8</name>
<protein>
    <recommendedName>
        <fullName evidence="1">FMN-dependent NADH:quinone oxidoreductase</fullName>
        <ecNumber evidence="1">1.6.5.-</ecNumber>
    </recommendedName>
    <alternativeName>
        <fullName evidence="1">Azo-dye reductase</fullName>
    </alternativeName>
    <alternativeName>
        <fullName evidence="1">FMN-dependent NADH-azo compound oxidoreductase</fullName>
    </alternativeName>
    <alternativeName>
        <fullName evidence="1">FMN-dependent NADH-azoreductase</fullName>
        <ecNumber evidence="1">1.7.1.17</ecNumber>
    </alternativeName>
</protein>
<dbReference type="EC" id="1.6.5.-" evidence="1"/>
<dbReference type="EC" id="1.7.1.17" evidence="1"/>
<dbReference type="EMBL" id="CP000822">
    <property type="protein sequence ID" value="ABV12573.1"/>
    <property type="molecule type" value="Genomic_DNA"/>
</dbReference>
<dbReference type="RefSeq" id="WP_012132314.1">
    <property type="nucleotide sequence ID" value="NC_009792.1"/>
</dbReference>
<dbReference type="SMR" id="A8AGG0"/>
<dbReference type="STRING" id="290338.CKO_01439"/>
<dbReference type="GeneID" id="45135519"/>
<dbReference type="KEGG" id="cko:CKO_01439"/>
<dbReference type="HOGENOM" id="CLU_088964_0_0_6"/>
<dbReference type="OrthoDB" id="9787136at2"/>
<dbReference type="Proteomes" id="UP000008148">
    <property type="component" value="Chromosome"/>
</dbReference>
<dbReference type="GO" id="GO:0009055">
    <property type="term" value="F:electron transfer activity"/>
    <property type="evidence" value="ECO:0007669"/>
    <property type="project" value="UniProtKB-UniRule"/>
</dbReference>
<dbReference type="GO" id="GO:0010181">
    <property type="term" value="F:FMN binding"/>
    <property type="evidence" value="ECO:0007669"/>
    <property type="project" value="UniProtKB-UniRule"/>
</dbReference>
<dbReference type="GO" id="GO:0016652">
    <property type="term" value="F:oxidoreductase activity, acting on NAD(P)H as acceptor"/>
    <property type="evidence" value="ECO:0007669"/>
    <property type="project" value="UniProtKB-UniRule"/>
</dbReference>
<dbReference type="GO" id="GO:0016655">
    <property type="term" value="F:oxidoreductase activity, acting on NAD(P)H, quinone or similar compound as acceptor"/>
    <property type="evidence" value="ECO:0007669"/>
    <property type="project" value="InterPro"/>
</dbReference>
<dbReference type="FunFam" id="3.40.50.360:FF:000010">
    <property type="entry name" value="FMN-dependent NADH-azoreductase"/>
    <property type="match status" value="1"/>
</dbReference>
<dbReference type="Gene3D" id="3.40.50.360">
    <property type="match status" value="1"/>
</dbReference>
<dbReference type="HAMAP" id="MF_01216">
    <property type="entry name" value="Azoreductase_type1"/>
    <property type="match status" value="1"/>
</dbReference>
<dbReference type="InterPro" id="IPR003680">
    <property type="entry name" value="Flavodoxin_fold"/>
</dbReference>
<dbReference type="InterPro" id="IPR029039">
    <property type="entry name" value="Flavoprotein-like_sf"/>
</dbReference>
<dbReference type="InterPro" id="IPR050104">
    <property type="entry name" value="FMN-dep_NADH:Q_OxRdtase_AzoR1"/>
</dbReference>
<dbReference type="InterPro" id="IPR023048">
    <property type="entry name" value="NADH:quinone_OxRdtase_FMN_depd"/>
</dbReference>
<dbReference type="PANTHER" id="PTHR43741">
    <property type="entry name" value="FMN-DEPENDENT NADH-AZOREDUCTASE 1"/>
    <property type="match status" value="1"/>
</dbReference>
<dbReference type="PANTHER" id="PTHR43741:SF2">
    <property type="entry name" value="FMN-DEPENDENT NADH:QUINONE OXIDOREDUCTASE"/>
    <property type="match status" value="1"/>
</dbReference>
<dbReference type="Pfam" id="PF02525">
    <property type="entry name" value="Flavodoxin_2"/>
    <property type="match status" value="1"/>
</dbReference>
<dbReference type="SUPFAM" id="SSF52218">
    <property type="entry name" value="Flavoproteins"/>
    <property type="match status" value="1"/>
</dbReference>
<keyword id="KW-0285">Flavoprotein</keyword>
<keyword id="KW-0288">FMN</keyword>
<keyword id="KW-0520">NAD</keyword>
<keyword id="KW-0560">Oxidoreductase</keyword>
<keyword id="KW-1185">Reference proteome</keyword>
<reference key="1">
    <citation type="submission" date="2007-08" db="EMBL/GenBank/DDBJ databases">
        <authorList>
            <consortium name="The Citrobacter koseri Genome Sequencing Project"/>
            <person name="McClelland M."/>
            <person name="Sanderson E.K."/>
            <person name="Porwollik S."/>
            <person name="Spieth J."/>
            <person name="Clifton W.S."/>
            <person name="Latreille P."/>
            <person name="Courtney L."/>
            <person name="Wang C."/>
            <person name="Pepin K."/>
            <person name="Bhonagiri V."/>
            <person name="Nash W."/>
            <person name="Johnson M."/>
            <person name="Thiruvilangam P."/>
            <person name="Wilson R."/>
        </authorList>
    </citation>
    <scope>NUCLEOTIDE SEQUENCE [LARGE SCALE GENOMIC DNA]</scope>
    <source>
        <strain>ATCC BAA-895 / CDC 4225-83 / SGSC4696</strain>
    </source>
</reference>
<comment type="function">
    <text evidence="1">Quinone reductase that provides resistance to thiol-specific stress caused by electrophilic quinones.</text>
</comment>
<comment type="function">
    <text evidence="1">Also exhibits azoreductase activity. Catalyzes the reductive cleavage of the azo bond in aromatic azo compounds to the corresponding amines.</text>
</comment>
<comment type="catalytic activity">
    <reaction evidence="1">
        <text>2 a quinone + NADH + H(+) = 2 a 1,4-benzosemiquinone + NAD(+)</text>
        <dbReference type="Rhea" id="RHEA:65952"/>
        <dbReference type="ChEBI" id="CHEBI:15378"/>
        <dbReference type="ChEBI" id="CHEBI:57540"/>
        <dbReference type="ChEBI" id="CHEBI:57945"/>
        <dbReference type="ChEBI" id="CHEBI:132124"/>
        <dbReference type="ChEBI" id="CHEBI:134225"/>
    </reaction>
</comment>
<comment type="catalytic activity">
    <reaction evidence="1">
        <text>N,N-dimethyl-1,4-phenylenediamine + anthranilate + 2 NAD(+) = 2-(4-dimethylaminophenyl)diazenylbenzoate + 2 NADH + 2 H(+)</text>
        <dbReference type="Rhea" id="RHEA:55872"/>
        <dbReference type="ChEBI" id="CHEBI:15378"/>
        <dbReference type="ChEBI" id="CHEBI:15783"/>
        <dbReference type="ChEBI" id="CHEBI:16567"/>
        <dbReference type="ChEBI" id="CHEBI:57540"/>
        <dbReference type="ChEBI" id="CHEBI:57945"/>
        <dbReference type="ChEBI" id="CHEBI:71579"/>
        <dbReference type="EC" id="1.7.1.17"/>
    </reaction>
</comment>
<comment type="cofactor">
    <cofactor evidence="1">
        <name>FMN</name>
        <dbReference type="ChEBI" id="CHEBI:58210"/>
    </cofactor>
    <text evidence="1">Binds 1 FMN per subunit.</text>
</comment>
<comment type="subunit">
    <text evidence="1">Homodimer.</text>
</comment>
<comment type="similarity">
    <text evidence="1">Belongs to the azoreductase type 1 family.</text>
</comment>
<evidence type="ECO:0000255" key="1">
    <source>
        <dbReference type="HAMAP-Rule" id="MF_01216"/>
    </source>
</evidence>